<name>CCME_YERPE</name>
<reference key="1">
    <citation type="journal article" date="2001" name="Nature">
        <title>Genome sequence of Yersinia pestis, the causative agent of plague.</title>
        <authorList>
            <person name="Parkhill J."/>
            <person name="Wren B.W."/>
            <person name="Thomson N.R."/>
            <person name="Titball R.W."/>
            <person name="Holden M.T.G."/>
            <person name="Prentice M.B."/>
            <person name="Sebaihia M."/>
            <person name="James K.D."/>
            <person name="Churcher C.M."/>
            <person name="Mungall K.L."/>
            <person name="Baker S."/>
            <person name="Basham D."/>
            <person name="Bentley S.D."/>
            <person name="Brooks K."/>
            <person name="Cerdeno-Tarraga A.-M."/>
            <person name="Chillingworth T."/>
            <person name="Cronin A."/>
            <person name="Davies R.M."/>
            <person name="Davis P."/>
            <person name="Dougan G."/>
            <person name="Feltwell T."/>
            <person name="Hamlin N."/>
            <person name="Holroyd S."/>
            <person name="Jagels K."/>
            <person name="Karlyshev A.V."/>
            <person name="Leather S."/>
            <person name="Moule S."/>
            <person name="Oyston P.C.F."/>
            <person name="Quail M.A."/>
            <person name="Rutherford K.M."/>
            <person name="Simmonds M."/>
            <person name="Skelton J."/>
            <person name="Stevens K."/>
            <person name="Whitehead S."/>
            <person name="Barrell B.G."/>
        </authorList>
    </citation>
    <scope>NUCLEOTIDE SEQUENCE [LARGE SCALE GENOMIC DNA]</scope>
    <source>
        <strain>CO-92 / Biovar Orientalis</strain>
    </source>
</reference>
<reference key="2">
    <citation type="journal article" date="2002" name="J. Bacteriol.">
        <title>Genome sequence of Yersinia pestis KIM.</title>
        <authorList>
            <person name="Deng W."/>
            <person name="Burland V."/>
            <person name="Plunkett G. III"/>
            <person name="Boutin A."/>
            <person name="Mayhew G.F."/>
            <person name="Liss P."/>
            <person name="Perna N.T."/>
            <person name="Rose D.J."/>
            <person name="Mau B."/>
            <person name="Zhou S."/>
            <person name="Schwartz D.C."/>
            <person name="Fetherston J.D."/>
            <person name="Lindler L.E."/>
            <person name="Brubaker R.R."/>
            <person name="Plano G.V."/>
            <person name="Straley S.C."/>
            <person name="McDonough K.A."/>
            <person name="Nilles M.L."/>
            <person name="Matson J.S."/>
            <person name="Blattner F.R."/>
            <person name="Perry R.D."/>
        </authorList>
    </citation>
    <scope>NUCLEOTIDE SEQUENCE [LARGE SCALE GENOMIC DNA]</scope>
    <source>
        <strain>KIM10+ / Biovar Mediaevalis</strain>
    </source>
</reference>
<reference key="3">
    <citation type="journal article" date="2004" name="DNA Res.">
        <title>Complete genome sequence of Yersinia pestis strain 91001, an isolate avirulent to humans.</title>
        <authorList>
            <person name="Song Y."/>
            <person name="Tong Z."/>
            <person name="Wang J."/>
            <person name="Wang L."/>
            <person name="Guo Z."/>
            <person name="Han Y."/>
            <person name="Zhang J."/>
            <person name="Pei D."/>
            <person name="Zhou D."/>
            <person name="Qin H."/>
            <person name="Pang X."/>
            <person name="Han Y."/>
            <person name="Zhai J."/>
            <person name="Li M."/>
            <person name="Cui B."/>
            <person name="Qi Z."/>
            <person name="Jin L."/>
            <person name="Dai R."/>
            <person name="Chen F."/>
            <person name="Li S."/>
            <person name="Ye C."/>
            <person name="Du Z."/>
            <person name="Lin W."/>
            <person name="Wang J."/>
            <person name="Yu J."/>
            <person name="Yang H."/>
            <person name="Wang J."/>
            <person name="Huang P."/>
            <person name="Yang R."/>
        </authorList>
    </citation>
    <scope>NUCLEOTIDE SEQUENCE [LARGE SCALE GENOMIC DNA]</scope>
    <source>
        <strain>91001 / Biovar Mediaevalis</strain>
    </source>
</reference>
<keyword id="KW-0997">Cell inner membrane</keyword>
<keyword id="KW-1003">Cell membrane</keyword>
<keyword id="KW-0201">Cytochrome c-type biogenesis</keyword>
<keyword id="KW-0349">Heme</keyword>
<keyword id="KW-0408">Iron</keyword>
<keyword id="KW-0472">Membrane</keyword>
<keyword id="KW-0479">Metal-binding</keyword>
<keyword id="KW-1185">Reference proteome</keyword>
<keyword id="KW-0735">Signal-anchor</keyword>
<keyword id="KW-0812">Transmembrane</keyword>
<keyword id="KW-1133">Transmembrane helix</keyword>
<evidence type="ECO:0000255" key="1">
    <source>
        <dbReference type="HAMAP-Rule" id="MF_01959"/>
    </source>
</evidence>
<evidence type="ECO:0000256" key="2">
    <source>
        <dbReference type="SAM" id="MobiDB-lite"/>
    </source>
</evidence>
<dbReference type="EMBL" id="AL590842">
    <property type="protein sequence ID" value="CAL21357.1"/>
    <property type="molecule type" value="Genomic_DNA"/>
</dbReference>
<dbReference type="EMBL" id="AE009952">
    <property type="protein sequence ID" value="AAM85140.1"/>
    <property type="molecule type" value="Genomic_DNA"/>
</dbReference>
<dbReference type="EMBL" id="AE017042">
    <property type="protein sequence ID" value="AAS62631.1"/>
    <property type="molecule type" value="Genomic_DNA"/>
</dbReference>
<dbReference type="PIR" id="AB0334">
    <property type="entry name" value="AB0334"/>
</dbReference>
<dbReference type="RefSeq" id="WP_002209697.1">
    <property type="nucleotide sequence ID" value="NZ_WUCM01000012.1"/>
</dbReference>
<dbReference type="RefSeq" id="YP_002347685.1">
    <property type="nucleotide sequence ID" value="NC_003143.1"/>
</dbReference>
<dbReference type="SMR" id="Q8ZD54"/>
<dbReference type="STRING" id="214092.YPO2738"/>
<dbReference type="PaxDb" id="214092-YPO2738"/>
<dbReference type="DNASU" id="1146518"/>
<dbReference type="EnsemblBacteria" id="AAS62631">
    <property type="protein sequence ID" value="AAS62631"/>
    <property type="gene ID" value="YP_2426"/>
</dbReference>
<dbReference type="GeneID" id="57975951"/>
<dbReference type="KEGG" id="ype:YPO2738"/>
<dbReference type="KEGG" id="ypk:y1571"/>
<dbReference type="KEGG" id="ypm:YP_2426"/>
<dbReference type="PATRIC" id="fig|214092.21.peg.3181"/>
<dbReference type="eggNOG" id="COG2332">
    <property type="taxonomic scope" value="Bacteria"/>
</dbReference>
<dbReference type="HOGENOM" id="CLU_079503_1_0_6"/>
<dbReference type="OMA" id="HVEFAVH"/>
<dbReference type="OrthoDB" id="9793584at2"/>
<dbReference type="Proteomes" id="UP000000815">
    <property type="component" value="Chromosome"/>
</dbReference>
<dbReference type="Proteomes" id="UP000001019">
    <property type="component" value="Chromosome"/>
</dbReference>
<dbReference type="Proteomes" id="UP000002490">
    <property type="component" value="Chromosome"/>
</dbReference>
<dbReference type="GO" id="GO:0005886">
    <property type="term" value="C:plasma membrane"/>
    <property type="evidence" value="ECO:0007669"/>
    <property type="project" value="UniProtKB-SubCell"/>
</dbReference>
<dbReference type="GO" id="GO:0020037">
    <property type="term" value="F:heme binding"/>
    <property type="evidence" value="ECO:0007669"/>
    <property type="project" value="InterPro"/>
</dbReference>
<dbReference type="GO" id="GO:0046872">
    <property type="term" value="F:metal ion binding"/>
    <property type="evidence" value="ECO:0007669"/>
    <property type="project" value="UniProtKB-KW"/>
</dbReference>
<dbReference type="GO" id="GO:0017004">
    <property type="term" value="P:cytochrome complex assembly"/>
    <property type="evidence" value="ECO:0007669"/>
    <property type="project" value="UniProtKB-KW"/>
</dbReference>
<dbReference type="FunFam" id="2.40.50.140:FF:000104">
    <property type="entry name" value="Cytochrome c-type biogenesis protein CcmE"/>
    <property type="match status" value="1"/>
</dbReference>
<dbReference type="Gene3D" id="2.40.50.140">
    <property type="entry name" value="Nucleic acid-binding proteins"/>
    <property type="match status" value="1"/>
</dbReference>
<dbReference type="HAMAP" id="MF_01959">
    <property type="entry name" value="CcmE"/>
    <property type="match status" value="1"/>
</dbReference>
<dbReference type="InterPro" id="IPR004329">
    <property type="entry name" value="CcmE"/>
</dbReference>
<dbReference type="InterPro" id="IPR036127">
    <property type="entry name" value="CcmE-like_sf"/>
</dbReference>
<dbReference type="InterPro" id="IPR012340">
    <property type="entry name" value="NA-bd_OB-fold"/>
</dbReference>
<dbReference type="NCBIfam" id="NF009635">
    <property type="entry name" value="PRK13150.1"/>
    <property type="match status" value="1"/>
</dbReference>
<dbReference type="NCBIfam" id="NF009638">
    <property type="entry name" value="PRK13165.1"/>
    <property type="match status" value="1"/>
</dbReference>
<dbReference type="NCBIfam" id="NF009727">
    <property type="entry name" value="PRK13254.1-1"/>
    <property type="match status" value="1"/>
</dbReference>
<dbReference type="NCBIfam" id="NF009729">
    <property type="entry name" value="PRK13254.1-3"/>
    <property type="match status" value="1"/>
</dbReference>
<dbReference type="NCBIfam" id="NF009731">
    <property type="entry name" value="PRK13254.1-5"/>
    <property type="match status" value="1"/>
</dbReference>
<dbReference type="PANTHER" id="PTHR34128">
    <property type="entry name" value="CYTOCHROME C-TYPE BIOGENESIS PROTEIN CCME HOMOLOG, MITOCHONDRIAL"/>
    <property type="match status" value="1"/>
</dbReference>
<dbReference type="PANTHER" id="PTHR34128:SF2">
    <property type="entry name" value="CYTOCHROME C-TYPE BIOGENESIS PROTEIN CCME HOMOLOG, MITOCHONDRIAL"/>
    <property type="match status" value="1"/>
</dbReference>
<dbReference type="Pfam" id="PF03100">
    <property type="entry name" value="CcmE"/>
    <property type="match status" value="1"/>
</dbReference>
<dbReference type="SUPFAM" id="SSF82093">
    <property type="entry name" value="Heme chaperone CcmE"/>
    <property type="match status" value="1"/>
</dbReference>
<proteinExistence type="inferred from homology"/>
<protein>
    <recommendedName>
        <fullName evidence="1">Cytochrome c-type biogenesis protein CcmE</fullName>
    </recommendedName>
    <alternativeName>
        <fullName evidence="1">Cytochrome c maturation protein E</fullName>
    </alternativeName>
    <alternativeName>
        <fullName evidence="1">Heme chaperone CcmE</fullName>
    </alternativeName>
</protein>
<accession>Q8ZD54</accession>
<accession>Q0WDF3</accession>
<accession>Q74SX8</accession>
<accession>Q7CJB9</accession>
<comment type="function">
    <text evidence="1">Heme chaperone required for the biogenesis of c-type cytochromes. Transiently binds heme delivered by CcmC and transfers the heme to apo-cytochromes in a process facilitated by CcmF and CcmH.</text>
</comment>
<comment type="subcellular location">
    <subcellularLocation>
        <location evidence="1">Cell inner membrane</location>
        <topology evidence="1">Single-pass type II membrane protein</topology>
        <orientation evidence="1">Periplasmic side</orientation>
    </subcellularLocation>
</comment>
<comment type="similarity">
    <text evidence="1">Belongs to the CcmE/CycJ family.</text>
</comment>
<feature type="chain" id="PRO_0000238893" description="Cytochrome c-type biogenesis protein CcmE">
    <location>
        <begin position="1"/>
        <end position="164"/>
    </location>
</feature>
<feature type="topological domain" description="Cytoplasmic" evidence="1">
    <location>
        <begin position="1"/>
        <end position="8"/>
    </location>
</feature>
<feature type="transmembrane region" description="Helical; Signal-anchor for type II membrane protein" evidence="1">
    <location>
        <begin position="9"/>
        <end position="29"/>
    </location>
</feature>
<feature type="topological domain" description="Periplasmic" evidence="1">
    <location>
        <begin position="30"/>
        <end position="164"/>
    </location>
</feature>
<feature type="region of interest" description="Disordered" evidence="2">
    <location>
        <begin position="140"/>
        <end position="164"/>
    </location>
</feature>
<feature type="binding site" description="covalent" evidence="1">
    <location>
        <position position="130"/>
    </location>
    <ligand>
        <name>heme</name>
        <dbReference type="ChEBI" id="CHEBI:30413"/>
    </ligand>
</feature>
<feature type="binding site" description="axial binding residue" evidence="1">
    <location>
        <position position="134"/>
    </location>
    <ligand>
        <name>heme</name>
        <dbReference type="ChEBI" id="CHEBI:30413"/>
    </ligand>
    <ligandPart>
        <name>Fe</name>
        <dbReference type="ChEBI" id="CHEBI:18248"/>
    </ligandPart>
</feature>
<organism>
    <name type="scientific">Yersinia pestis</name>
    <dbReference type="NCBI Taxonomy" id="632"/>
    <lineage>
        <taxon>Bacteria</taxon>
        <taxon>Pseudomonadati</taxon>
        <taxon>Pseudomonadota</taxon>
        <taxon>Gammaproteobacteria</taxon>
        <taxon>Enterobacterales</taxon>
        <taxon>Yersiniaceae</taxon>
        <taxon>Yersinia</taxon>
    </lineage>
</organism>
<gene>
    <name evidence="1" type="primary">ccmE</name>
    <name evidence="1" type="synonym">cycJ</name>
    <name type="ordered locus">YPO2738</name>
    <name type="ordered locus">y1571</name>
    <name type="ordered locus">YP_2426</name>
</gene>
<sequence>MNPRRKSRLYLAMVVLIGISLTTTLVLYALRSNIDLFYTPGEILQGKGERHEKPAIGQRLRIGGMVMPGSVQRDAKTLEMSFQVYDARGAVTVTYTGILPDLFREGQGVVAQGVFAEGNTVHAKEVLAKHDEKYTPPEVEEAMKENHSRPAAAYRGTNTTGNAL</sequence>